<organism>
    <name type="scientific">Blochmanniella pennsylvanica (strain BPEN)</name>
    <dbReference type="NCBI Taxonomy" id="291272"/>
    <lineage>
        <taxon>Bacteria</taxon>
        <taxon>Pseudomonadati</taxon>
        <taxon>Pseudomonadota</taxon>
        <taxon>Gammaproteobacteria</taxon>
        <taxon>Enterobacterales</taxon>
        <taxon>Enterobacteriaceae</taxon>
        <taxon>ant endosymbionts</taxon>
        <taxon>Candidatus Blochmanniella</taxon>
    </lineage>
</organism>
<name>SYM_BLOPB</name>
<proteinExistence type="inferred from homology"/>
<gene>
    <name evidence="1" type="primary">metG</name>
    <name type="ordered locus">BPEN_486</name>
</gene>
<reference key="1">
    <citation type="journal article" date="2005" name="Genome Res.">
        <title>Genome sequence of Blochmannia pennsylvanicus indicates parallel evolutionary trends among bacterial mutualists of insects.</title>
        <authorList>
            <person name="Degnan P.H."/>
            <person name="Lazarus A.B."/>
            <person name="Wernegreen J.J."/>
        </authorList>
    </citation>
    <scope>NUCLEOTIDE SEQUENCE [LARGE SCALE GENOMIC DNA]</scope>
    <source>
        <strain>BPEN</strain>
    </source>
</reference>
<accession>Q492J8</accession>
<protein>
    <recommendedName>
        <fullName evidence="1">Methionine--tRNA ligase</fullName>
        <ecNumber evidence="1">6.1.1.10</ecNumber>
    </recommendedName>
    <alternativeName>
        <fullName evidence="1">Methionyl-tRNA synthetase</fullName>
        <shortName evidence="1">MetRS</shortName>
    </alternativeName>
</protein>
<feature type="chain" id="PRO_0000331784" description="Methionine--tRNA ligase">
    <location>
        <begin position="1"/>
        <end position="555"/>
    </location>
</feature>
<feature type="short sequence motif" description="'HIGH' region">
    <location>
        <begin position="13"/>
        <end position="23"/>
    </location>
</feature>
<feature type="short sequence motif" description="'KMSKS' region">
    <location>
        <begin position="330"/>
        <end position="334"/>
    </location>
</feature>
<feature type="binding site" evidence="1">
    <location>
        <position position="144"/>
    </location>
    <ligand>
        <name>Zn(2+)</name>
        <dbReference type="ChEBI" id="CHEBI:29105"/>
    </ligand>
</feature>
<feature type="binding site" evidence="1">
    <location>
        <position position="147"/>
    </location>
    <ligand>
        <name>Zn(2+)</name>
        <dbReference type="ChEBI" id="CHEBI:29105"/>
    </ligand>
</feature>
<feature type="binding site" evidence="1">
    <location>
        <position position="157"/>
    </location>
    <ligand>
        <name>Zn(2+)</name>
        <dbReference type="ChEBI" id="CHEBI:29105"/>
    </ligand>
</feature>
<feature type="binding site" evidence="1">
    <location>
        <position position="160"/>
    </location>
    <ligand>
        <name>Zn(2+)</name>
        <dbReference type="ChEBI" id="CHEBI:29105"/>
    </ligand>
</feature>
<feature type="binding site" evidence="1">
    <location>
        <position position="333"/>
    </location>
    <ligand>
        <name>ATP</name>
        <dbReference type="ChEBI" id="CHEBI:30616"/>
    </ligand>
</feature>
<dbReference type="EC" id="6.1.1.10" evidence="1"/>
<dbReference type="EMBL" id="CP000016">
    <property type="protein sequence ID" value="AAZ41101.1"/>
    <property type="molecule type" value="Genomic_DNA"/>
</dbReference>
<dbReference type="SMR" id="Q492J8"/>
<dbReference type="STRING" id="291272.BPEN_486"/>
<dbReference type="KEGG" id="bpn:BPEN_486"/>
<dbReference type="eggNOG" id="COG0143">
    <property type="taxonomic scope" value="Bacteria"/>
</dbReference>
<dbReference type="HOGENOM" id="CLU_009710_7_0_6"/>
<dbReference type="OrthoDB" id="9810191at2"/>
<dbReference type="Proteomes" id="UP000007794">
    <property type="component" value="Chromosome"/>
</dbReference>
<dbReference type="GO" id="GO:0005829">
    <property type="term" value="C:cytosol"/>
    <property type="evidence" value="ECO:0007669"/>
    <property type="project" value="TreeGrafter"/>
</dbReference>
<dbReference type="GO" id="GO:0005524">
    <property type="term" value="F:ATP binding"/>
    <property type="evidence" value="ECO:0007669"/>
    <property type="project" value="UniProtKB-UniRule"/>
</dbReference>
<dbReference type="GO" id="GO:0046872">
    <property type="term" value="F:metal ion binding"/>
    <property type="evidence" value="ECO:0007669"/>
    <property type="project" value="UniProtKB-KW"/>
</dbReference>
<dbReference type="GO" id="GO:0004825">
    <property type="term" value="F:methionine-tRNA ligase activity"/>
    <property type="evidence" value="ECO:0007669"/>
    <property type="project" value="UniProtKB-UniRule"/>
</dbReference>
<dbReference type="GO" id="GO:0006431">
    <property type="term" value="P:methionyl-tRNA aminoacylation"/>
    <property type="evidence" value="ECO:0007669"/>
    <property type="project" value="UniProtKB-UniRule"/>
</dbReference>
<dbReference type="CDD" id="cd07957">
    <property type="entry name" value="Anticodon_Ia_Met"/>
    <property type="match status" value="1"/>
</dbReference>
<dbReference type="CDD" id="cd00814">
    <property type="entry name" value="MetRS_core"/>
    <property type="match status" value="1"/>
</dbReference>
<dbReference type="FunFam" id="2.20.28.20:FF:000001">
    <property type="entry name" value="Methionine--tRNA ligase"/>
    <property type="match status" value="1"/>
</dbReference>
<dbReference type="Gene3D" id="3.40.50.620">
    <property type="entry name" value="HUPs"/>
    <property type="match status" value="1"/>
</dbReference>
<dbReference type="Gene3D" id="1.10.730.10">
    <property type="entry name" value="Isoleucyl-tRNA Synthetase, Domain 1"/>
    <property type="match status" value="1"/>
</dbReference>
<dbReference type="Gene3D" id="2.20.28.20">
    <property type="entry name" value="Methionyl-tRNA synthetase, Zn-domain"/>
    <property type="match status" value="1"/>
</dbReference>
<dbReference type="HAMAP" id="MF_00098">
    <property type="entry name" value="Met_tRNA_synth_type1"/>
    <property type="match status" value="1"/>
</dbReference>
<dbReference type="InterPro" id="IPR001412">
    <property type="entry name" value="aa-tRNA-synth_I_CS"/>
</dbReference>
<dbReference type="InterPro" id="IPR041872">
    <property type="entry name" value="Anticodon_Met"/>
</dbReference>
<dbReference type="InterPro" id="IPR023458">
    <property type="entry name" value="Met-tRNA_ligase_1"/>
</dbReference>
<dbReference type="InterPro" id="IPR014758">
    <property type="entry name" value="Met-tRNA_synth"/>
</dbReference>
<dbReference type="InterPro" id="IPR015413">
    <property type="entry name" value="Methionyl/Leucyl_tRNA_Synth"/>
</dbReference>
<dbReference type="InterPro" id="IPR033911">
    <property type="entry name" value="MetRS_core"/>
</dbReference>
<dbReference type="InterPro" id="IPR029038">
    <property type="entry name" value="MetRS_Zn"/>
</dbReference>
<dbReference type="InterPro" id="IPR014729">
    <property type="entry name" value="Rossmann-like_a/b/a_fold"/>
</dbReference>
<dbReference type="InterPro" id="IPR009080">
    <property type="entry name" value="tRNAsynth_Ia_anticodon-bd"/>
</dbReference>
<dbReference type="NCBIfam" id="TIGR00398">
    <property type="entry name" value="metG"/>
    <property type="match status" value="1"/>
</dbReference>
<dbReference type="NCBIfam" id="NF001100">
    <property type="entry name" value="PRK00133.1"/>
    <property type="match status" value="1"/>
</dbReference>
<dbReference type="PANTHER" id="PTHR45765">
    <property type="entry name" value="METHIONINE--TRNA LIGASE"/>
    <property type="match status" value="1"/>
</dbReference>
<dbReference type="PANTHER" id="PTHR45765:SF1">
    <property type="entry name" value="METHIONINE--TRNA LIGASE, CYTOPLASMIC"/>
    <property type="match status" value="1"/>
</dbReference>
<dbReference type="Pfam" id="PF09334">
    <property type="entry name" value="tRNA-synt_1g"/>
    <property type="match status" value="1"/>
</dbReference>
<dbReference type="PRINTS" id="PR01041">
    <property type="entry name" value="TRNASYNTHMET"/>
</dbReference>
<dbReference type="SUPFAM" id="SSF47323">
    <property type="entry name" value="Anticodon-binding domain of a subclass of class I aminoacyl-tRNA synthetases"/>
    <property type="match status" value="1"/>
</dbReference>
<dbReference type="SUPFAM" id="SSF57770">
    <property type="entry name" value="Methionyl-tRNA synthetase (MetRS), Zn-domain"/>
    <property type="match status" value="1"/>
</dbReference>
<dbReference type="SUPFAM" id="SSF52374">
    <property type="entry name" value="Nucleotidylyl transferase"/>
    <property type="match status" value="1"/>
</dbReference>
<dbReference type="PROSITE" id="PS00178">
    <property type="entry name" value="AA_TRNA_LIGASE_I"/>
    <property type="match status" value="1"/>
</dbReference>
<sequence length="555" mass="64541">MTTKKMLVTCALPYANGSLHIGHMLEHIQADIWVRYQRMQGNCVYFICADDAHGTAIMLKSQQLNIAPEQMIAQIRQEHQRDCYKFGISYDNYYSTHSDETRELLHDIYSRLNTRGFIKSKFISQLYDSKKNMFLPDRFVKGICPKCKKDDQYGDNCAACGTIYTSLELINPKSVISGTSPIIRKSEHLFFDLPAFTDTLRTWIRSGSIQKEVANKVEEWFKLGLKKWDISRDAPYFGFKIPNSSEKYFYVWMDAPVGYMGTFKNLCKKNKNISFNDFWGSNSKTDLYHFIGKDIIYFHCLFWPAVLSGSQFRKPTNIFVHGHVTLNGSKISKSKGTCINVSTYLSCLNPDYLRYYYATKLSSHANDIDLNLSDFITRVNSDIINKILNLASRNSGFIHQYYNGHLSNTLTHPLIYNMFIESRHYIGKLFQKREFNYAMREIMKLADEANRYIDKHAPWHIAKKIDRRQEALSIYSMGIQLFRVLMIYLKPVLPKLANYSECFLNTRLTWGSLSAPLSNHRINKFKIIFSRIHPDQIASMTNKSQLHERLTDNNV</sequence>
<comment type="function">
    <text evidence="1">Is required not only for elongation of protein synthesis but also for the initiation of all mRNA translation through initiator tRNA(fMet) aminoacylation.</text>
</comment>
<comment type="catalytic activity">
    <reaction evidence="1">
        <text>tRNA(Met) + L-methionine + ATP = L-methionyl-tRNA(Met) + AMP + diphosphate</text>
        <dbReference type="Rhea" id="RHEA:13481"/>
        <dbReference type="Rhea" id="RHEA-COMP:9667"/>
        <dbReference type="Rhea" id="RHEA-COMP:9698"/>
        <dbReference type="ChEBI" id="CHEBI:30616"/>
        <dbReference type="ChEBI" id="CHEBI:33019"/>
        <dbReference type="ChEBI" id="CHEBI:57844"/>
        <dbReference type="ChEBI" id="CHEBI:78442"/>
        <dbReference type="ChEBI" id="CHEBI:78530"/>
        <dbReference type="ChEBI" id="CHEBI:456215"/>
        <dbReference type="EC" id="6.1.1.10"/>
    </reaction>
</comment>
<comment type="cofactor">
    <cofactor evidence="1">
        <name>Zn(2+)</name>
        <dbReference type="ChEBI" id="CHEBI:29105"/>
    </cofactor>
    <text evidence="1">Binds 1 zinc ion per subunit.</text>
</comment>
<comment type="subunit">
    <text evidence="1">Monomer.</text>
</comment>
<comment type="subcellular location">
    <subcellularLocation>
        <location evidence="1">Cytoplasm</location>
    </subcellularLocation>
</comment>
<comment type="similarity">
    <text evidence="1">Belongs to the class-I aminoacyl-tRNA synthetase family. MetG type 1 subfamily.</text>
</comment>
<evidence type="ECO:0000255" key="1">
    <source>
        <dbReference type="HAMAP-Rule" id="MF_00098"/>
    </source>
</evidence>
<keyword id="KW-0030">Aminoacyl-tRNA synthetase</keyword>
<keyword id="KW-0067">ATP-binding</keyword>
<keyword id="KW-0963">Cytoplasm</keyword>
<keyword id="KW-0436">Ligase</keyword>
<keyword id="KW-0479">Metal-binding</keyword>
<keyword id="KW-0547">Nucleotide-binding</keyword>
<keyword id="KW-0648">Protein biosynthesis</keyword>
<keyword id="KW-1185">Reference proteome</keyword>
<keyword id="KW-0862">Zinc</keyword>